<accession>B7J252</accession>
<evidence type="ECO:0000255" key="1">
    <source>
        <dbReference type="HAMAP-Rule" id="MF_01345"/>
    </source>
</evidence>
<evidence type="ECO:0000305" key="2"/>
<feature type="chain" id="PRO_1000143224" description="Small ribosomal subunit protein uS17">
    <location>
        <begin position="1"/>
        <end position="84"/>
    </location>
</feature>
<reference key="1">
    <citation type="journal article" date="2011" name="J. Bacteriol.">
        <title>Whole-genome sequences of thirteen isolates of Borrelia burgdorferi.</title>
        <authorList>
            <person name="Schutzer S.E."/>
            <person name="Fraser-Liggett C.M."/>
            <person name="Casjens S.R."/>
            <person name="Qiu W.G."/>
            <person name="Dunn J.J."/>
            <person name="Mongodin E.F."/>
            <person name="Luft B.J."/>
        </authorList>
    </citation>
    <scope>NUCLEOTIDE SEQUENCE [LARGE SCALE GENOMIC DNA]</scope>
    <source>
        <strain>ZS7</strain>
    </source>
</reference>
<keyword id="KW-0687">Ribonucleoprotein</keyword>
<keyword id="KW-0689">Ribosomal protein</keyword>
<keyword id="KW-0694">RNA-binding</keyword>
<keyword id="KW-0699">rRNA-binding</keyword>
<dbReference type="EMBL" id="CP001205">
    <property type="protein sequence ID" value="ACK75124.1"/>
    <property type="molecule type" value="Genomic_DNA"/>
</dbReference>
<dbReference type="RefSeq" id="WP_002557078.1">
    <property type="nucleotide sequence ID" value="NC_011728.1"/>
</dbReference>
<dbReference type="SMR" id="B7J252"/>
<dbReference type="GeneID" id="56567922"/>
<dbReference type="KEGG" id="bbz:BbuZS7_0498"/>
<dbReference type="HOGENOM" id="CLU_073626_1_0_12"/>
<dbReference type="Proteomes" id="UP000006901">
    <property type="component" value="Chromosome"/>
</dbReference>
<dbReference type="GO" id="GO:0022627">
    <property type="term" value="C:cytosolic small ribosomal subunit"/>
    <property type="evidence" value="ECO:0007669"/>
    <property type="project" value="TreeGrafter"/>
</dbReference>
<dbReference type="GO" id="GO:0019843">
    <property type="term" value="F:rRNA binding"/>
    <property type="evidence" value="ECO:0007669"/>
    <property type="project" value="UniProtKB-UniRule"/>
</dbReference>
<dbReference type="GO" id="GO:0003735">
    <property type="term" value="F:structural constituent of ribosome"/>
    <property type="evidence" value="ECO:0007669"/>
    <property type="project" value="InterPro"/>
</dbReference>
<dbReference type="GO" id="GO:0006412">
    <property type="term" value="P:translation"/>
    <property type="evidence" value="ECO:0007669"/>
    <property type="project" value="UniProtKB-UniRule"/>
</dbReference>
<dbReference type="CDD" id="cd00364">
    <property type="entry name" value="Ribosomal_uS17"/>
    <property type="match status" value="1"/>
</dbReference>
<dbReference type="Gene3D" id="2.40.50.140">
    <property type="entry name" value="Nucleic acid-binding proteins"/>
    <property type="match status" value="1"/>
</dbReference>
<dbReference type="HAMAP" id="MF_01345_B">
    <property type="entry name" value="Ribosomal_uS17_B"/>
    <property type="match status" value="1"/>
</dbReference>
<dbReference type="InterPro" id="IPR012340">
    <property type="entry name" value="NA-bd_OB-fold"/>
</dbReference>
<dbReference type="InterPro" id="IPR000266">
    <property type="entry name" value="Ribosomal_uS17"/>
</dbReference>
<dbReference type="InterPro" id="IPR019984">
    <property type="entry name" value="Ribosomal_uS17_bact/chlr"/>
</dbReference>
<dbReference type="InterPro" id="IPR019979">
    <property type="entry name" value="Ribosomal_uS17_CS"/>
</dbReference>
<dbReference type="NCBIfam" id="NF004123">
    <property type="entry name" value="PRK05610.1"/>
    <property type="match status" value="1"/>
</dbReference>
<dbReference type="NCBIfam" id="TIGR03635">
    <property type="entry name" value="uS17_bact"/>
    <property type="match status" value="1"/>
</dbReference>
<dbReference type="PANTHER" id="PTHR10744">
    <property type="entry name" value="40S RIBOSOMAL PROTEIN S11 FAMILY MEMBER"/>
    <property type="match status" value="1"/>
</dbReference>
<dbReference type="PANTHER" id="PTHR10744:SF1">
    <property type="entry name" value="SMALL RIBOSOMAL SUBUNIT PROTEIN US17M"/>
    <property type="match status" value="1"/>
</dbReference>
<dbReference type="Pfam" id="PF00366">
    <property type="entry name" value="Ribosomal_S17"/>
    <property type="match status" value="1"/>
</dbReference>
<dbReference type="PRINTS" id="PR00973">
    <property type="entry name" value="RIBOSOMALS17"/>
</dbReference>
<dbReference type="SUPFAM" id="SSF50249">
    <property type="entry name" value="Nucleic acid-binding proteins"/>
    <property type="match status" value="1"/>
</dbReference>
<dbReference type="PROSITE" id="PS00056">
    <property type="entry name" value="RIBOSOMAL_S17"/>
    <property type="match status" value="1"/>
</dbReference>
<sequence length="84" mass="9852">MARENKKELIGKVVSDKMSKTIVVEIVQRKMHPIYHKYLKVSKKVKAHDEKEVSKVGDKVKIIEVRPISKDKRWSLVEVLEKLK</sequence>
<gene>
    <name evidence="1" type="primary">rpsQ</name>
    <name type="ordered locus">BbuZS7_0498</name>
</gene>
<comment type="function">
    <text evidence="1">One of the primary rRNA binding proteins, it binds specifically to the 5'-end of 16S ribosomal RNA.</text>
</comment>
<comment type="subunit">
    <text evidence="1">Part of the 30S ribosomal subunit.</text>
</comment>
<comment type="similarity">
    <text evidence="1">Belongs to the universal ribosomal protein uS17 family.</text>
</comment>
<organism>
    <name type="scientific">Borreliella burgdorferi (strain ZS7)</name>
    <name type="common">Borrelia burgdorferi</name>
    <dbReference type="NCBI Taxonomy" id="445985"/>
    <lineage>
        <taxon>Bacteria</taxon>
        <taxon>Pseudomonadati</taxon>
        <taxon>Spirochaetota</taxon>
        <taxon>Spirochaetia</taxon>
        <taxon>Spirochaetales</taxon>
        <taxon>Borreliaceae</taxon>
        <taxon>Borreliella</taxon>
    </lineage>
</organism>
<protein>
    <recommendedName>
        <fullName evidence="1">Small ribosomal subunit protein uS17</fullName>
    </recommendedName>
    <alternativeName>
        <fullName evidence="2">30S ribosomal protein S17</fullName>
    </alternativeName>
</protein>
<proteinExistence type="inferred from homology"/>
<name>RS17_BORBZ</name>